<dbReference type="EMBL" id="AL009126">
    <property type="protein sequence ID" value="CAB12646.1"/>
    <property type="molecule type" value="Genomic_DNA"/>
</dbReference>
<dbReference type="PIR" id="E69805">
    <property type="entry name" value="E69805"/>
</dbReference>
<dbReference type="RefSeq" id="NP_388698.1">
    <property type="nucleotide sequence ID" value="NC_000964.3"/>
</dbReference>
<dbReference type="RefSeq" id="WP_003243177.1">
    <property type="nucleotide sequence ID" value="NZ_OZ025638.1"/>
</dbReference>
<dbReference type="SMR" id="O31558"/>
<dbReference type="FunCoup" id="O31558">
    <property type="interactions" value="68"/>
</dbReference>
<dbReference type="STRING" id="224308.BSU08170"/>
<dbReference type="PaxDb" id="224308-BSU08170"/>
<dbReference type="EnsemblBacteria" id="CAB12646">
    <property type="protein sequence ID" value="CAB12646"/>
    <property type="gene ID" value="BSU_08170"/>
</dbReference>
<dbReference type="GeneID" id="936160"/>
<dbReference type="KEGG" id="bsu:BSU08170"/>
<dbReference type="PATRIC" id="fig|224308.179.peg.883"/>
<dbReference type="eggNOG" id="COG4842">
    <property type="taxonomic scope" value="Bacteria"/>
</dbReference>
<dbReference type="InParanoid" id="O31558"/>
<dbReference type="OrthoDB" id="2886731at2"/>
<dbReference type="BioCyc" id="BSUB:BSU08170-MONOMER"/>
<dbReference type="Proteomes" id="UP000001570">
    <property type="component" value="Chromosome"/>
</dbReference>
<dbReference type="Gene3D" id="1.10.287.1060">
    <property type="entry name" value="ESAT-6-like"/>
    <property type="match status" value="1"/>
</dbReference>
<dbReference type="InterPro" id="IPR036689">
    <property type="entry name" value="ESAT-6-like_sf"/>
</dbReference>
<dbReference type="InterPro" id="IPR010310">
    <property type="entry name" value="T7SS_ESAT-6-like"/>
</dbReference>
<dbReference type="NCBIfam" id="TIGR03930">
    <property type="entry name" value="WXG100_ESAT6"/>
    <property type="match status" value="1"/>
</dbReference>
<dbReference type="Pfam" id="PF06013">
    <property type="entry name" value="WXG100"/>
    <property type="match status" value="1"/>
</dbReference>
<dbReference type="SUPFAM" id="SSF140453">
    <property type="entry name" value="EsxAB dimer-like"/>
    <property type="match status" value="1"/>
</dbReference>
<accession>O31558</accession>
<comment type="similarity">
    <text evidence="2">Belongs to the WXG100 family.</text>
</comment>
<sequence>MDSYKVIELANKYSAAAEEVRSSKMLLESRLSALGDAWQGKARDSFDQDFEETKAAYDQFEQELLETSQELKAAAVKIEERKAEIARMEELERKAREERHKLGR</sequence>
<keyword id="KW-0175">Coiled coil</keyword>
<keyword id="KW-1185">Reference proteome</keyword>
<protein>
    <recommendedName>
        <fullName>Uncharacterized protein YfjA</fullName>
    </recommendedName>
</protein>
<reference key="1">
    <citation type="journal article" date="1997" name="Nature">
        <title>The complete genome sequence of the Gram-positive bacterium Bacillus subtilis.</title>
        <authorList>
            <person name="Kunst F."/>
            <person name="Ogasawara N."/>
            <person name="Moszer I."/>
            <person name="Albertini A.M."/>
            <person name="Alloni G."/>
            <person name="Azevedo V."/>
            <person name="Bertero M.G."/>
            <person name="Bessieres P."/>
            <person name="Bolotin A."/>
            <person name="Borchert S."/>
            <person name="Borriss R."/>
            <person name="Boursier L."/>
            <person name="Brans A."/>
            <person name="Braun M."/>
            <person name="Brignell S.C."/>
            <person name="Bron S."/>
            <person name="Brouillet S."/>
            <person name="Bruschi C.V."/>
            <person name="Caldwell B."/>
            <person name="Capuano V."/>
            <person name="Carter N.M."/>
            <person name="Choi S.-K."/>
            <person name="Codani J.-J."/>
            <person name="Connerton I.F."/>
            <person name="Cummings N.J."/>
            <person name="Daniel R.A."/>
            <person name="Denizot F."/>
            <person name="Devine K.M."/>
            <person name="Duesterhoeft A."/>
            <person name="Ehrlich S.D."/>
            <person name="Emmerson P.T."/>
            <person name="Entian K.-D."/>
            <person name="Errington J."/>
            <person name="Fabret C."/>
            <person name="Ferrari E."/>
            <person name="Foulger D."/>
            <person name="Fritz C."/>
            <person name="Fujita M."/>
            <person name="Fujita Y."/>
            <person name="Fuma S."/>
            <person name="Galizzi A."/>
            <person name="Galleron N."/>
            <person name="Ghim S.-Y."/>
            <person name="Glaser P."/>
            <person name="Goffeau A."/>
            <person name="Golightly E.J."/>
            <person name="Grandi G."/>
            <person name="Guiseppi G."/>
            <person name="Guy B.J."/>
            <person name="Haga K."/>
            <person name="Haiech J."/>
            <person name="Harwood C.R."/>
            <person name="Henaut A."/>
            <person name="Hilbert H."/>
            <person name="Holsappel S."/>
            <person name="Hosono S."/>
            <person name="Hullo M.-F."/>
            <person name="Itaya M."/>
            <person name="Jones L.-M."/>
            <person name="Joris B."/>
            <person name="Karamata D."/>
            <person name="Kasahara Y."/>
            <person name="Klaerr-Blanchard M."/>
            <person name="Klein C."/>
            <person name="Kobayashi Y."/>
            <person name="Koetter P."/>
            <person name="Koningstein G."/>
            <person name="Krogh S."/>
            <person name="Kumano M."/>
            <person name="Kurita K."/>
            <person name="Lapidus A."/>
            <person name="Lardinois S."/>
            <person name="Lauber J."/>
            <person name="Lazarevic V."/>
            <person name="Lee S.-M."/>
            <person name="Levine A."/>
            <person name="Liu H."/>
            <person name="Masuda S."/>
            <person name="Mauel C."/>
            <person name="Medigue C."/>
            <person name="Medina N."/>
            <person name="Mellado R.P."/>
            <person name="Mizuno M."/>
            <person name="Moestl D."/>
            <person name="Nakai S."/>
            <person name="Noback M."/>
            <person name="Noone D."/>
            <person name="O'Reilly M."/>
            <person name="Ogawa K."/>
            <person name="Ogiwara A."/>
            <person name="Oudega B."/>
            <person name="Park S.-H."/>
            <person name="Parro V."/>
            <person name="Pohl T.M."/>
            <person name="Portetelle D."/>
            <person name="Porwollik S."/>
            <person name="Prescott A.M."/>
            <person name="Presecan E."/>
            <person name="Pujic P."/>
            <person name="Purnelle B."/>
            <person name="Rapoport G."/>
            <person name="Rey M."/>
            <person name="Reynolds S."/>
            <person name="Rieger M."/>
            <person name="Rivolta C."/>
            <person name="Rocha E."/>
            <person name="Roche B."/>
            <person name="Rose M."/>
            <person name="Sadaie Y."/>
            <person name="Sato T."/>
            <person name="Scanlan E."/>
            <person name="Schleich S."/>
            <person name="Schroeter R."/>
            <person name="Scoffone F."/>
            <person name="Sekiguchi J."/>
            <person name="Sekowska A."/>
            <person name="Seror S.J."/>
            <person name="Serror P."/>
            <person name="Shin B.-S."/>
            <person name="Soldo B."/>
            <person name="Sorokin A."/>
            <person name="Tacconi E."/>
            <person name="Takagi T."/>
            <person name="Takahashi H."/>
            <person name="Takemaru K."/>
            <person name="Takeuchi M."/>
            <person name="Tamakoshi A."/>
            <person name="Tanaka T."/>
            <person name="Terpstra P."/>
            <person name="Tognoni A."/>
            <person name="Tosato V."/>
            <person name="Uchiyama S."/>
            <person name="Vandenbol M."/>
            <person name="Vannier F."/>
            <person name="Vassarotti A."/>
            <person name="Viari A."/>
            <person name="Wambutt R."/>
            <person name="Wedler E."/>
            <person name="Wedler H."/>
            <person name="Weitzenegger T."/>
            <person name="Winters P."/>
            <person name="Wipat A."/>
            <person name="Yamamoto H."/>
            <person name="Yamane K."/>
            <person name="Yasumoto K."/>
            <person name="Yata K."/>
            <person name="Yoshida K."/>
            <person name="Yoshikawa H.-F."/>
            <person name="Zumstein E."/>
            <person name="Yoshikawa H."/>
            <person name="Danchin A."/>
        </authorList>
    </citation>
    <scope>NUCLEOTIDE SEQUENCE [LARGE SCALE GENOMIC DNA]</scope>
    <source>
        <strain>168</strain>
    </source>
</reference>
<feature type="chain" id="PRO_0000360564" description="Uncharacterized protein YfjA">
    <location>
        <begin position="1"/>
        <end position="104"/>
    </location>
</feature>
<feature type="coiled-coil region" evidence="1">
    <location>
        <begin position="42"/>
        <end position="104"/>
    </location>
</feature>
<name>YFJA_BACSU</name>
<proteinExistence type="inferred from homology"/>
<organism>
    <name type="scientific">Bacillus subtilis (strain 168)</name>
    <dbReference type="NCBI Taxonomy" id="224308"/>
    <lineage>
        <taxon>Bacteria</taxon>
        <taxon>Bacillati</taxon>
        <taxon>Bacillota</taxon>
        <taxon>Bacilli</taxon>
        <taxon>Bacillales</taxon>
        <taxon>Bacillaceae</taxon>
        <taxon>Bacillus</taxon>
    </lineage>
</organism>
<evidence type="ECO:0000255" key="1"/>
<evidence type="ECO:0000305" key="2"/>
<gene>
    <name type="primary">yfjA</name>
    <name type="ordered locus">BSU08170</name>
</gene>